<keyword id="KW-1185">Reference proteome</keyword>
<keyword id="KW-0687">Ribonucleoprotein</keyword>
<keyword id="KW-0689">Ribosomal protein</keyword>
<organism>
    <name type="scientific">Heliobacterium modesticaldum (strain ATCC 51547 / Ice1)</name>
    <dbReference type="NCBI Taxonomy" id="498761"/>
    <lineage>
        <taxon>Bacteria</taxon>
        <taxon>Bacillati</taxon>
        <taxon>Bacillota</taxon>
        <taxon>Clostridia</taxon>
        <taxon>Eubacteriales</taxon>
        <taxon>Heliobacteriaceae</taxon>
        <taxon>Heliomicrobium</taxon>
    </lineage>
</organism>
<accession>B0TBW5</accession>
<proteinExistence type="inferred from homology"/>
<sequence>MLVMNLQYFAHKKGVGSSRNGRDSEAKRLGVKRSDGQAVLSGNILVRQRGTKIHPGNNVGLGSDDTLFALIDGVVKFERKGRDKKQVSVYAV</sequence>
<name>RL27_HELMI</name>
<dbReference type="EMBL" id="CP000930">
    <property type="protein sequence ID" value="ABZ85238.1"/>
    <property type="molecule type" value="Genomic_DNA"/>
</dbReference>
<dbReference type="RefSeq" id="WP_012283722.1">
    <property type="nucleotide sequence ID" value="NC_010337.2"/>
</dbReference>
<dbReference type="SMR" id="B0TBW5"/>
<dbReference type="STRING" id="498761.HM1_2709"/>
<dbReference type="KEGG" id="hmo:HM1_2709"/>
<dbReference type="eggNOG" id="COG0211">
    <property type="taxonomic scope" value="Bacteria"/>
</dbReference>
<dbReference type="HOGENOM" id="CLU_095424_4_0_9"/>
<dbReference type="OrthoDB" id="9803474at2"/>
<dbReference type="Proteomes" id="UP000008550">
    <property type="component" value="Chromosome"/>
</dbReference>
<dbReference type="GO" id="GO:0022625">
    <property type="term" value="C:cytosolic large ribosomal subunit"/>
    <property type="evidence" value="ECO:0007669"/>
    <property type="project" value="TreeGrafter"/>
</dbReference>
<dbReference type="GO" id="GO:0003735">
    <property type="term" value="F:structural constituent of ribosome"/>
    <property type="evidence" value="ECO:0007669"/>
    <property type="project" value="InterPro"/>
</dbReference>
<dbReference type="GO" id="GO:0006412">
    <property type="term" value="P:translation"/>
    <property type="evidence" value="ECO:0007669"/>
    <property type="project" value="UniProtKB-UniRule"/>
</dbReference>
<dbReference type="FunFam" id="2.40.50.100:FF:000004">
    <property type="entry name" value="50S ribosomal protein L27"/>
    <property type="match status" value="1"/>
</dbReference>
<dbReference type="Gene3D" id="2.40.50.100">
    <property type="match status" value="1"/>
</dbReference>
<dbReference type="HAMAP" id="MF_00539">
    <property type="entry name" value="Ribosomal_bL27"/>
    <property type="match status" value="1"/>
</dbReference>
<dbReference type="InterPro" id="IPR001684">
    <property type="entry name" value="Ribosomal_bL27"/>
</dbReference>
<dbReference type="InterPro" id="IPR018261">
    <property type="entry name" value="Ribosomal_bL27_CS"/>
</dbReference>
<dbReference type="NCBIfam" id="TIGR00062">
    <property type="entry name" value="L27"/>
    <property type="match status" value="1"/>
</dbReference>
<dbReference type="PANTHER" id="PTHR15893:SF0">
    <property type="entry name" value="LARGE RIBOSOMAL SUBUNIT PROTEIN BL27M"/>
    <property type="match status" value="1"/>
</dbReference>
<dbReference type="PANTHER" id="PTHR15893">
    <property type="entry name" value="RIBOSOMAL PROTEIN L27"/>
    <property type="match status" value="1"/>
</dbReference>
<dbReference type="Pfam" id="PF01016">
    <property type="entry name" value="Ribosomal_L27"/>
    <property type="match status" value="1"/>
</dbReference>
<dbReference type="PRINTS" id="PR00063">
    <property type="entry name" value="RIBOSOMALL27"/>
</dbReference>
<dbReference type="SUPFAM" id="SSF110324">
    <property type="entry name" value="Ribosomal L27 protein-like"/>
    <property type="match status" value="1"/>
</dbReference>
<dbReference type="PROSITE" id="PS00831">
    <property type="entry name" value="RIBOSOMAL_L27"/>
    <property type="match status" value="1"/>
</dbReference>
<gene>
    <name evidence="2" type="primary">rpmA</name>
    <name type="ordered locus">Helmi_26130</name>
    <name type="ORF">HM1_2709</name>
</gene>
<comment type="PTM">
    <text evidence="1">The N-terminus is cleaved by ribosomal processing cysteine protease Prp.</text>
</comment>
<comment type="similarity">
    <text evidence="2">Belongs to the bacterial ribosomal protein bL27 family.</text>
</comment>
<evidence type="ECO:0000250" key="1">
    <source>
        <dbReference type="UniProtKB" id="Q2FXT0"/>
    </source>
</evidence>
<evidence type="ECO:0000255" key="2">
    <source>
        <dbReference type="HAMAP-Rule" id="MF_00539"/>
    </source>
</evidence>
<evidence type="ECO:0000305" key="3"/>
<protein>
    <recommendedName>
        <fullName evidence="2">Large ribosomal subunit protein bL27</fullName>
    </recommendedName>
    <alternativeName>
        <fullName evidence="3">50S ribosomal protein L27</fullName>
    </alternativeName>
</protein>
<feature type="propeptide" id="PRO_0000459899" evidence="1">
    <location>
        <begin position="1"/>
        <end position="9"/>
    </location>
</feature>
<feature type="chain" id="PRO_1000128756" description="Large ribosomal subunit protein bL27">
    <location>
        <begin position="10"/>
        <end position="92"/>
    </location>
</feature>
<reference key="1">
    <citation type="journal article" date="2008" name="J. Bacteriol.">
        <title>The genome of Heliobacterium modesticaldum, a phototrophic representative of the Firmicutes containing the simplest photosynthetic apparatus.</title>
        <authorList>
            <person name="Sattley W.M."/>
            <person name="Madigan M.T."/>
            <person name="Swingley W.D."/>
            <person name="Cheung P.C."/>
            <person name="Clocksin K.M."/>
            <person name="Conrad A.L."/>
            <person name="Dejesa L.C."/>
            <person name="Honchak B.M."/>
            <person name="Jung D.O."/>
            <person name="Karbach L.E."/>
            <person name="Kurdoglu A."/>
            <person name="Lahiri S."/>
            <person name="Mastrian S.D."/>
            <person name="Page L.E."/>
            <person name="Taylor H.L."/>
            <person name="Wang Z.T."/>
            <person name="Raymond J."/>
            <person name="Chen M."/>
            <person name="Blankenship R.E."/>
            <person name="Touchman J.W."/>
        </authorList>
    </citation>
    <scope>NUCLEOTIDE SEQUENCE [LARGE SCALE GENOMIC DNA]</scope>
    <source>
        <strain>ATCC 51547 / Ice1</strain>
    </source>
</reference>